<comment type="function">
    <text evidence="1">Required for the formation of a threonylcarbamoyl group on adenosine at position 37 (t(6)A37) in tRNAs that read codons beginning with adenine. Is probably involved in the transfer of the threonylcarbamoyl moiety of threonylcarbamoyl-AMP (TC-AMP) to the N6 group of A37.</text>
</comment>
<comment type="catalytic activity">
    <reaction evidence="1">
        <text>L-threonylcarbamoyladenylate + adenosine(37) in tRNA = N(6)-L-threonylcarbamoyladenosine(37) in tRNA + AMP + H(+)</text>
        <dbReference type="Rhea" id="RHEA:37059"/>
        <dbReference type="Rhea" id="RHEA-COMP:10162"/>
        <dbReference type="Rhea" id="RHEA-COMP:10163"/>
        <dbReference type="ChEBI" id="CHEBI:15378"/>
        <dbReference type="ChEBI" id="CHEBI:73682"/>
        <dbReference type="ChEBI" id="CHEBI:74411"/>
        <dbReference type="ChEBI" id="CHEBI:74418"/>
        <dbReference type="ChEBI" id="CHEBI:456215"/>
        <dbReference type="EC" id="2.3.1.234"/>
    </reaction>
</comment>
<comment type="cofactor">
    <cofactor evidence="1">
        <name>Fe(2+)</name>
        <dbReference type="ChEBI" id="CHEBI:29033"/>
    </cofactor>
    <text evidence="1">Binds 1 Fe(2+) ion per subunit.</text>
</comment>
<comment type="subcellular location">
    <subcellularLocation>
        <location evidence="1">Cytoplasm</location>
    </subcellularLocation>
</comment>
<comment type="similarity">
    <text evidence="1">Belongs to the KAE1 / TsaD family.</text>
</comment>
<proteinExistence type="inferred from homology"/>
<evidence type="ECO:0000255" key="1">
    <source>
        <dbReference type="HAMAP-Rule" id="MF_01446"/>
    </source>
</evidence>
<keyword id="KW-0012">Acyltransferase</keyword>
<keyword id="KW-0963">Cytoplasm</keyword>
<keyword id="KW-0408">Iron</keyword>
<keyword id="KW-0479">Metal-binding</keyword>
<keyword id="KW-0808">Transferase</keyword>
<keyword id="KW-0819">tRNA processing</keyword>
<gene>
    <name evidence="1" type="primary">kae1</name>
    <name type="ordered locus">Pcal_0308</name>
</gene>
<protein>
    <recommendedName>
        <fullName evidence="1">tRNA N6-adenosine threonylcarbamoyltransferase</fullName>
        <ecNumber evidence="1">2.3.1.234</ecNumber>
    </recommendedName>
    <alternativeName>
        <fullName evidence="1">N6-L-threonylcarbamoyladenine synthase</fullName>
        <shortName evidence="1">t(6)A synthase</shortName>
    </alternativeName>
    <alternativeName>
        <fullName evidence="1">t(6)A37 threonylcarbamoyladenosine biosynthesis protein Kae1</fullName>
    </alternativeName>
    <alternativeName>
        <fullName evidence="1">tRNA threonylcarbamoyladenosine biosynthesis protein Kae1</fullName>
    </alternativeName>
</protein>
<organism>
    <name type="scientific">Pyrobaculum calidifontis (strain DSM 21063 / JCM 11548 / VA1)</name>
    <dbReference type="NCBI Taxonomy" id="410359"/>
    <lineage>
        <taxon>Archaea</taxon>
        <taxon>Thermoproteota</taxon>
        <taxon>Thermoprotei</taxon>
        <taxon>Thermoproteales</taxon>
        <taxon>Thermoproteaceae</taxon>
        <taxon>Pyrobaculum</taxon>
    </lineage>
</organism>
<dbReference type="EC" id="2.3.1.234" evidence="1"/>
<dbReference type="EMBL" id="CP000561">
    <property type="protein sequence ID" value="ABO07743.1"/>
    <property type="molecule type" value="Genomic_DNA"/>
</dbReference>
<dbReference type="RefSeq" id="WP_011849000.1">
    <property type="nucleotide sequence ID" value="NC_009073.1"/>
</dbReference>
<dbReference type="SMR" id="A3MSX6"/>
<dbReference type="STRING" id="410359.Pcal_0308"/>
<dbReference type="GeneID" id="4908633"/>
<dbReference type="KEGG" id="pcl:Pcal_0308"/>
<dbReference type="eggNOG" id="arCOG01183">
    <property type="taxonomic scope" value="Archaea"/>
</dbReference>
<dbReference type="HOGENOM" id="CLU_023208_2_2_2"/>
<dbReference type="OrthoDB" id="6818at2157"/>
<dbReference type="Proteomes" id="UP000001431">
    <property type="component" value="Chromosome"/>
</dbReference>
<dbReference type="GO" id="GO:0005737">
    <property type="term" value="C:cytoplasm"/>
    <property type="evidence" value="ECO:0007669"/>
    <property type="project" value="UniProtKB-SubCell"/>
</dbReference>
<dbReference type="GO" id="GO:0000408">
    <property type="term" value="C:EKC/KEOPS complex"/>
    <property type="evidence" value="ECO:0007669"/>
    <property type="project" value="InterPro"/>
</dbReference>
<dbReference type="GO" id="GO:0005506">
    <property type="term" value="F:iron ion binding"/>
    <property type="evidence" value="ECO:0007669"/>
    <property type="project" value="UniProtKB-UniRule"/>
</dbReference>
<dbReference type="GO" id="GO:0061711">
    <property type="term" value="F:N(6)-L-threonylcarbamoyladenine synthase activity"/>
    <property type="evidence" value="ECO:0007669"/>
    <property type="project" value="UniProtKB-EC"/>
</dbReference>
<dbReference type="GO" id="GO:0002949">
    <property type="term" value="P:tRNA threonylcarbamoyladenosine modification"/>
    <property type="evidence" value="ECO:0007669"/>
    <property type="project" value="UniProtKB-UniRule"/>
</dbReference>
<dbReference type="Gene3D" id="3.30.420.40">
    <property type="match status" value="2"/>
</dbReference>
<dbReference type="HAMAP" id="MF_01446">
    <property type="entry name" value="Kae1"/>
    <property type="match status" value="1"/>
</dbReference>
<dbReference type="InterPro" id="IPR043129">
    <property type="entry name" value="ATPase_NBD"/>
</dbReference>
<dbReference type="InterPro" id="IPR000905">
    <property type="entry name" value="Gcp-like_dom"/>
</dbReference>
<dbReference type="InterPro" id="IPR017861">
    <property type="entry name" value="KAE1/TsaD"/>
</dbReference>
<dbReference type="InterPro" id="IPR034680">
    <property type="entry name" value="Kae1_archaea_euk"/>
</dbReference>
<dbReference type="InterPro" id="IPR017860">
    <property type="entry name" value="Peptidase_M22_CS"/>
</dbReference>
<dbReference type="NCBIfam" id="TIGR03722">
    <property type="entry name" value="arch_KAE1"/>
    <property type="match status" value="1"/>
</dbReference>
<dbReference type="NCBIfam" id="TIGR00329">
    <property type="entry name" value="gcp_kae1"/>
    <property type="match status" value="1"/>
</dbReference>
<dbReference type="PANTHER" id="PTHR11735">
    <property type="entry name" value="TRNA N6-ADENOSINE THREONYLCARBAMOYLTRANSFERASE"/>
    <property type="match status" value="1"/>
</dbReference>
<dbReference type="PANTHER" id="PTHR11735:SF14">
    <property type="entry name" value="TRNA N6-ADENOSINE THREONYLCARBAMOYLTRANSFERASE"/>
    <property type="match status" value="1"/>
</dbReference>
<dbReference type="Pfam" id="PF00814">
    <property type="entry name" value="TsaD"/>
    <property type="match status" value="1"/>
</dbReference>
<dbReference type="PRINTS" id="PR00789">
    <property type="entry name" value="OSIALOPTASE"/>
</dbReference>
<dbReference type="SUPFAM" id="SSF53067">
    <property type="entry name" value="Actin-like ATPase domain"/>
    <property type="match status" value="1"/>
</dbReference>
<dbReference type="PROSITE" id="PS01016">
    <property type="entry name" value="GLYCOPROTEASE"/>
    <property type="match status" value="1"/>
</dbReference>
<accession>A3MSX6</accession>
<name>KAE1_PYRCJ</name>
<reference key="1">
    <citation type="submission" date="2007-02" db="EMBL/GenBank/DDBJ databases">
        <title>Complete sequence of Pyrobaculum calidifontis JCM 11548.</title>
        <authorList>
            <consortium name="US DOE Joint Genome Institute"/>
            <person name="Copeland A."/>
            <person name="Lucas S."/>
            <person name="Lapidus A."/>
            <person name="Barry K."/>
            <person name="Glavina del Rio T."/>
            <person name="Dalin E."/>
            <person name="Tice H."/>
            <person name="Pitluck S."/>
            <person name="Chain P."/>
            <person name="Malfatti S."/>
            <person name="Shin M."/>
            <person name="Vergez L."/>
            <person name="Schmutz J."/>
            <person name="Larimer F."/>
            <person name="Land M."/>
            <person name="Hauser L."/>
            <person name="Kyrpides N."/>
            <person name="Mikhailova N."/>
            <person name="Cozen A.E."/>
            <person name="Fitz-Gibbon S.T."/>
            <person name="House C.H."/>
            <person name="Saltikov C."/>
            <person name="Lowe T.M."/>
            <person name="Richardson P."/>
        </authorList>
    </citation>
    <scope>NUCLEOTIDE SEQUENCE [LARGE SCALE GENOMIC DNA]</scope>
    <source>
        <strain>DSM 21063 / JCM 11548 / VA1</strain>
    </source>
</reference>
<sequence>MWFYSVPEVIIGVESTAHTFSLGLVSGGRVLGQVGKTYVPPAGRGIHPREAAEHHAKAAPQLFRKLIEEFNVSLGDVEAVAYSAGPGLGPALRVGAVFARALAIKLGVPLVPVHHGVAHVEIARYATGSCDPLVLLISGGHTVVAGFSDGRYRVFGETLDVAIGNAIDMFAREVGLGFPGVPAVEKCAEAAEELVAFPMPIVGQDLSYAGLTTYALQLVKRGIPLPVVCRSLVETAYYMLAEVTERALAFTKKRELVVAGGVARSRRLREILYEVGREHGAEVKFVPDEYAGDNGAMIALTGYYAYRRGIAVEPGESFVRQRWRLDTVDVPWFYDLCNR</sequence>
<feature type="chain" id="PRO_0000303639" description="tRNA N6-adenosine threonylcarbamoyltransferase">
    <location>
        <begin position="1"/>
        <end position="339"/>
    </location>
</feature>
<feature type="binding site" evidence="1">
    <location>
        <position position="115"/>
    </location>
    <ligand>
        <name>Fe cation</name>
        <dbReference type="ChEBI" id="CHEBI:24875"/>
    </ligand>
</feature>
<feature type="binding site" evidence="1">
    <location>
        <position position="119"/>
    </location>
    <ligand>
        <name>Fe cation</name>
        <dbReference type="ChEBI" id="CHEBI:24875"/>
    </ligand>
</feature>
<feature type="binding site" evidence="1">
    <location>
        <begin position="136"/>
        <end position="140"/>
    </location>
    <ligand>
        <name>substrate</name>
    </ligand>
</feature>
<feature type="binding site" evidence="1">
    <location>
        <position position="168"/>
    </location>
    <ligand>
        <name>substrate</name>
    </ligand>
</feature>
<feature type="binding site" evidence="1">
    <location>
        <position position="185"/>
    </location>
    <ligand>
        <name>substrate</name>
    </ligand>
</feature>
<feature type="binding site" evidence="1">
    <location>
        <position position="265"/>
    </location>
    <ligand>
        <name>substrate</name>
    </ligand>
</feature>
<feature type="binding site" evidence="1">
    <location>
        <position position="293"/>
    </location>
    <ligand>
        <name>Fe cation</name>
        <dbReference type="ChEBI" id="CHEBI:24875"/>
    </ligand>
</feature>